<sequence length="299" mass="33992">MTKIKIVVIVGPTAVGKTALGISLAKAFNGEIISGDSQQVYRQLDIGTAKATQEEQEAAVHHLIDIREVTESYSAYDFVQDAQKAISDIVSRGKLPIIVGGTGLYLQSLLEGYHLGGQVNQEAVKAYRNELEQLDDHDLYERLQVNNITIEQVNRRRAIRALELAQFADELENAETAYEPLIIGLNDDRQVIYDRINQRVDRMLENGLLEEAKWLYEHYPTVQASRGIGYKELFPYFVGEMTLAEASDQLKQNTRRFAKRQLTWFRNRMAVSFTAITAPDYPQVVHDRVRDFLGQKEKS</sequence>
<evidence type="ECO:0000255" key="1">
    <source>
        <dbReference type="HAMAP-Rule" id="MF_00185"/>
    </source>
</evidence>
<organism>
    <name type="scientific">Streptococcus pyogenes serotype M49 (strain NZ131)</name>
    <dbReference type="NCBI Taxonomy" id="471876"/>
    <lineage>
        <taxon>Bacteria</taxon>
        <taxon>Bacillati</taxon>
        <taxon>Bacillota</taxon>
        <taxon>Bacilli</taxon>
        <taxon>Lactobacillales</taxon>
        <taxon>Streptococcaceae</taxon>
        <taxon>Streptococcus</taxon>
    </lineage>
</organism>
<accession>B5XL33</accession>
<protein>
    <recommendedName>
        <fullName evidence="1">tRNA dimethylallyltransferase</fullName>
        <ecNumber evidence="1">2.5.1.75</ecNumber>
    </recommendedName>
    <alternativeName>
        <fullName evidence="1">Dimethylallyl diphosphate:tRNA dimethylallyltransferase</fullName>
        <shortName evidence="1">DMAPP:tRNA dimethylallyltransferase</shortName>
        <shortName evidence="1">DMATase</shortName>
    </alternativeName>
    <alternativeName>
        <fullName evidence="1">Isopentenyl-diphosphate:tRNA isopentenyltransferase</fullName>
        <shortName evidence="1">IPP transferase</shortName>
        <shortName evidence="1">IPPT</shortName>
        <shortName evidence="1">IPTase</shortName>
    </alternativeName>
</protein>
<dbReference type="EC" id="2.5.1.75" evidence="1"/>
<dbReference type="EMBL" id="CP000829">
    <property type="protein sequence ID" value="ACI61045.1"/>
    <property type="molecule type" value="Genomic_DNA"/>
</dbReference>
<dbReference type="SMR" id="B5XL33"/>
<dbReference type="KEGG" id="soz:Spy49_0730"/>
<dbReference type="HOGENOM" id="CLU_032616_0_1_9"/>
<dbReference type="Proteomes" id="UP000001039">
    <property type="component" value="Chromosome"/>
</dbReference>
<dbReference type="GO" id="GO:0005524">
    <property type="term" value="F:ATP binding"/>
    <property type="evidence" value="ECO:0007669"/>
    <property type="project" value="UniProtKB-UniRule"/>
</dbReference>
<dbReference type="GO" id="GO:0052381">
    <property type="term" value="F:tRNA dimethylallyltransferase activity"/>
    <property type="evidence" value="ECO:0007669"/>
    <property type="project" value="UniProtKB-UniRule"/>
</dbReference>
<dbReference type="GO" id="GO:0006400">
    <property type="term" value="P:tRNA modification"/>
    <property type="evidence" value="ECO:0007669"/>
    <property type="project" value="TreeGrafter"/>
</dbReference>
<dbReference type="Gene3D" id="3.40.50.300">
    <property type="entry name" value="P-loop containing nucleotide triphosphate hydrolases"/>
    <property type="match status" value="1"/>
</dbReference>
<dbReference type="HAMAP" id="MF_00185">
    <property type="entry name" value="IPP_trans"/>
    <property type="match status" value="1"/>
</dbReference>
<dbReference type="InterPro" id="IPR039657">
    <property type="entry name" value="Dimethylallyltransferase"/>
</dbReference>
<dbReference type="InterPro" id="IPR018022">
    <property type="entry name" value="IPT"/>
</dbReference>
<dbReference type="InterPro" id="IPR027417">
    <property type="entry name" value="P-loop_NTPase"/>
</dbReference>
<dbReference type="NCBIfam" id="TIGR00174">
    <property type="entry name" value="miaA"/>
    <property type="match status" value="1"/>
</dbReference>
<dbReference type="PANTHER" id="PTHR11088">
    <property type="entry name" value="TRNA DIMETHYLALLYLTRANSFERASE"/>
    <property type="match status" value="1"/>
</dbReference>
<dbReference type="PANTHER" id="PTHR11088:SF60">
    <property type="entry name" value="TRNA DIMETHYLALLYLTRANSFERASE"/>
    <property type="match status" value="1"/>
</dbReference>
<dbReference type="Pfam" id="PF01715">
    <property type="entry name" value="IPPT"/>
    <property type="match status" value="1"/>
</dbReference>
<dbReference type="SUPFAM" id="SSF52540">
    <property type="entry name" value="P-loop containing nucleoside triphosphate hydrolases"/>
    <property type="match status" value="1"/>
</dbReference>
<gene>
    <name evidence="1" type="primary">miaA</name>
    <name type="ordered locus">Spy49_0730</name>
</gene>
<proteinExistence type="inferred from homology"/>
<keyword id="KW-0067">ATP-binding</keyword>
<keyword id="KW-0460">Magnesium</keyword>
<keyword id="KW-0547">Nucleotide-binding</keyword>
<keyword id="KW-0808">Transferase</keyword>
<keyword id="KW-0819">tRNA processing</keyword>
<reference key="1">
    <citation type="journal article" date="2008" name="J. Bacteriol.">
        <title>Genome sequence of a nephritogenic and highly transformable M49 strain of Streptococcus pyogenes.</title>
        <authorList>
            <person name="McShan W.M."/>
            <person name="Ferretti J.J."/>
            <person name="Karasawa T."/>
            <person name="Suvorov A.N."/>
            <person name="Lin S."/>
            <person name="Qin B."/>
            <person name="Jia H."/>
            <person name="Kenton S."/>
            <person name="Najar F."/>
            <person name="Wu H."/>
            <person name="Scott J."/>
            <person name="Roe B.A."/>
            <person name="Savic D.J."/>
        </authorList>
    </citation>
    <scope>NUCLEOTIDE SEQUENCE [LARGE SCALE GENOMIC DNA]</scope>
    <source>
        <strain>NZ131</strain>
    </source>
</reference>
<comment type="function">
    <text evidence="1">Catalyzes the transfer of a dimethylallyl group onto the adenine at position 37 in tRNAs that read codons beginning with uridine, leading to the formation of N6-(dimethylallyl)adenosine (i(6)A).</text>
</comment>
<comment type="catalytic activity">
    <reaction evidence="1">
        <text>adenosine(37) in tRNA + dimethylallyl diphosphate = N(6)-dimethylallyladenosine(37) in tRNA + diphosphate</text>
        <dbReference type="Rhea" id="RHEA:26482"/>
        <dbReference type="Rhea" id="RHEA-COMP:10162"/>
        <dbReference type="Rhea" id="RHEA-COMP:10375"/>
        <dbReference type="ChEBI" id="CHEBI:33019"/>
        <dbReference type="ChEBI" id="CHEBI:57623"/>
        <dbReference type="ChEBI" id="CHEBI:74411"/>
        <dbReference type="ChEBI" id="CHEBI:74415"/>
        <dbReference type="EC" id="2.5.1.75"/>
    </reaction>
</comment>
<comment type="cofactor">
    <cofactor evidence="1">
        <name>Mg(2+)</name>
        <dbReference type="ChEBI" id="CHEBI:18420"/>
    </cofactor>
</comment>
<comment type="subunit">
    <text evidence="1">Monomer.</text>
</comment>
<comment type="similarity">
    <text evidence="1">Belongs to the IPP transferase family.</text>
</comment>
<feature type="chain" id="PRO_1000098694" description="tRNA dimethylallyltransferase">
    <location>
        <begin position="1"/>
        <end position="299"/>
    </location>
</feature>
<feature type="region of interest" description="Interaction with substrate tRNA" evidence="1">
    <location>
        <begin position="36"/>
        <end position="39"/>
    </location>
</feature>
<feature type="binding site" evidence="1">
    <location>
        <begin position="11"/>
        <end position="18"/>
    </location>
    <ligand>
        <name>ATP</name>
        <dbReference type="ChEBI" id="CHEBI:30616"/>
    </ligand>
</feature>
<feature type="binding site" evidence="1">
    <location>
        <begin position="13"/>
        <end position="18"/>
    </location>
    <ligand>
        <name>substrate</name>
    </ligand>
</feature>
<feature type="site" description="Interaction with substrate tRNA" evidence="1">
    <location>
        <position position="102"/>
    </location>
</feature>
<feature type="site" description="Interaction with substrate tRNA" evidence="1">
    <location>
        <position position="128"/>
    </location>
</feature>
<name>MIAA_STRPZ</name>